<keyword id="KW-1015">Disulfide bond</keyword>
<keyword id="KW-0873">Pyrrolidone carboxylic acid</keyword>
<keyword id="KW-0964">Secreted</keyword>
<keyword id="KW-0732">Signal</keyword>
<keyword id="KW-0800">Toxin</keyword>
<proteinExistence type="evidence at transcript level"/>
<comment type="subcellular location">
    <subcellularLocation>
        <location evidence="1">Secreted</location>
    </subcellularLocation>
</comment>
<comment type="tissue specificity">
    <text>Expressed by the venom duct.</text>
</comment>
<comment type="domain">
    <text>The cysteine framework is XV (C-C-CC-C-C-C-C).</text>
</comment>
<comment type="PTM">
    <text evidence="1">Contains 4 disulfide bonds.</text>
</comment>
<comment type="similarity">
    <text evidence="3">Belongs to the conotoxin O2 superfamily.</text>
</comment>
<evidence type="ECO:0000250" key="1"/>
<evidence type="ECO:0000255" key="2"/>
<evidence type="ECO:0000305" key="3"/>
<organism>
    <name type="scientific">Conus betulinus</name>
    <name type="common">Beech cone</name>
    <dbReference type="NCBI Taxonomy" id="89764"/>
    <lineage>
        <taxon>Eukaryota</taxon>
        <taxon>Metazoa</taxon>
        <taxon>Spiralia</taxon>
        <taxon>Lophotrochozoa</taxon>
        <taxon>Mollusca</taxon>
        <taxon>Gastropoda</taxon>
        <taxon>Caenogastropoda</taxon>
        <taxon>Neogastropoda</taxon>
        <taxon>Conoidea</taxon>
        <taxon>Conidae</taxon>
        <taxon>Conus</taxon>
        <taxon>Dendroconus</taxon>
    </lineage>
</organism>
<protein>
    <recommendedName>
        <fullName>Conotoxin Bt15a</fullName>
    </recommendedName>
</protein>
<reference key="1">
    <citation type="submission" date="2006-04" db="EMBL/GenBank/DDBJ databases">
        <title>A novel class of conotoxin cDNAs with a distinctive cysteine arrangement.</title>
        <authorList>
            <person name="Jiang X."/>
            <person name="Pi C."/>
            <person name="Liu Y."/>
        </authorList>
    </citation>
    <scope>NUCLEOTIDE SEQUENCE [MRNA]</scope>
    <source>
        <tissue>Venom duct</tissue>
    </source>
</reference>
<name>CO2FA_CONBE</name>
<sequence>MEKLTILVLVATVLLAIQVLVQSDGEKPLKRRVKQYAAKRLSALMRGPRQCTPRNQRCEGDAECCPNLVCKCFTRPDCQSGYKCDTS</sequence>
<dbReference type="EMBL" id="DQ512965">
    <property type="protein sequence ID" value="ABG01719.1"/>
    <property type="molecule type" value="mRNA"/>
</dbReference>
<dbReference type="SMR" id="B0KZ78"/>
<dbReference type="ConoServer" id="2758">
    <property type="toxin name" value="Bt15a precursor"/>
</dbReference>
<dbReference type="GO" id="GO:0005576">
    <property type="term" value="C:extracellular region"/>
    <property type="evidence" value="ECO:0007669"/>
    <property type="project" value="UniProtKB-SubCell"/>
</dbReference>
<dbReference type="GO" id="GO:0008200">
    <property type="term" value="F:ion channel inhibitor activity"/>
    <property type="evidence" value="ECO:0007669"/>
    <property type="project" value="InterPro"/>
</dbReference>
<dbReference type="GO" id="GO:0090729">
    <property type="term" value="F:toxin activity"/>
    <property type="evidence" value="ECO:0007669"/>
    <property type="project" value="UniProtKB-KW"/>
</dbReference>
<dbReference type="InterPro" id="IPR004214">
    <property type="entry name" value="Conotoxin"/>
</dbReference>
<dbReference type="Pfam" id="PF02950">
    <property type="entry name" value="Conotoxin"/>
    <property type="match status" value="1"/>
</dbReference>
<accession>B0KZ78</accession>
<feature type="signal peptide" evidence="2">
    <location>
        <begin position="1"/>
        <end position="23"/>
    </location>
</feature>
<feature type="propeptide" id="PRO_0000392180" evidence="1">
    <location>
        <begin position="24"/>
        <end position="49"/>
    </location>
</feature>
<feature type="peptide" id="PRO_0000392181" description="Conotoxin Bt15a">
    <location>
        <begin position="50"/>
        <end position="87"/>
    </location>
</feature>
<feature type="modified residue" description="Pyrrolidone carboxylic acid" evidence="1">
    <location>
        <position position="50"/>
    </location>
</feature>